<protein>
    <recommendedName>
        <fullName>Nuclear cap-binding protein subunit 2</fullName>
    </recommendedName>
    <alternativeName>
        <fullName>20 kDa nuclear cap-binding protein</fullName>
    </alternativeName>
    <alternativeName>
        <fullName>NCBP 20 kDa subunit</fullName>
        <shortName>CBP20</shortName>
    </alternativeName>
</protein>
<feature type="chain" id="PRO_0000385265" description="Nuclear cap-binding protein subunit 2">
    <location>
        <begin position="1"/>
        <end position="154"/>
    </location>
</feature>
<feature type="domain" description="RRM" evidence="2">
    <location>
        <begin position="30"/>
        <end position="108"/>
    </location>
</feature>
<feature type="region of interest" description="Disordered" evidence="3">
    <location>
        <begin position="1"/>
        <end position="23"/>
    </location>
</feature>
<feature type="compositionally biased region" description="Basic and acidic residues" evidence="3">
    <location>
        <begin position="9"/>
        <end position="23"/>
    </location>
</feature>
<feature type="binding site" evidence="1">
    <location>
        <position position="10"/>
    </location>
    <ligand>
        <name>mRNA</name>
        <dbReference type="ChEBI" id="CHEBI:33699"/>
    </ligand>
    <ligandPart>
        <name>mRNA cap</name>
    </ligandPart>
</feature>
<feature type="binding site" evidence="1">
    <location>
        <position position="33"/>
    </location>
    <ligand>
        <name>mRNA</name>
        <dbReference type="ChEBI" id="CHEBI:33699"/>
    </ligand>
    <ligandPart>
        <name>mRNA cap</name>
    </ligandPart>
</feature>
<feature type="binding site" evidence="1">
    <location>
        <begin position="102"/>
        <end position="106"/>
    </location>
    <ligand>
        <name>mRNA</name>
        <dbReference type="ChEBI" id="CHEBI:33699"/>
    </ligand>
    <ligandPart>
        <name>mRNA cap</name>
    </ligandPart>
</feature>
<feature type="binding site" evidence="1">
    <location>
        <begin position="113"/>
        <end position="117"/>
    </location>
    <ligand>
        <name>mRNA</name>
        <dbReference type="ChEBI" id="CHEBI:33699"/>
    </ligand>
    <ligandPart>
        <name>mRNA cap</name>
    </ligandPart>
</feature>
<feature type="binding site" evidence="1">
    <location>
        <begin position="123"/>
        <end position="124"/>
    </location>
    <ligand>
        <name>mRNA</name>
        <dbReference type="ChEBI" id="CHEBI:33699"/>
    </ligand>
    <ligandPart>
        <name>mRNA cap</name>
    </ligandPart>
</feature>
<comment type="function">
    <text evidence="1">Component of the cap-binding complex (CBC), which binds co-transcriptionally to the 5' cap of pre-mRNAs and is involved in various processes such as pre-mRNA splicing and RNA-mediated gene silencing (RNAi). The CBC complex is involved in miRNA-mediated RNA interference via its interaction with Ars2 and is required for primary microRNAs (miRNAs) processing. Also involved in innate immunity via the short interfering RNAs (siRNAs) processing machinery by restricting the viral RNA production. In the CBC complex, Cbp20 recognizes and binds capped RNAs (m7GpppG-capped RNA) but requires Cbp80 to stabilize the movement of its N-terminal loop and lock the CBC into a high affinity cap-binding state with the cap structure (By similarity).</text>
</comment>
<comment type="subunit">
    <text evidence="1">Component of the nuclear cap-binding complex (CBC), a heterodimer composed of Cbp80 and Cbp20 that interacts with m7GpppG-capped RNA. Interacts with Ars2 (By similarity).</text>
</comment>
<comment type="subcellular location">
    <subcellularLocation>
        <location evidence="1">Nucleus</location>
    </subcellularLocation>
</comment>
<comment type="similarity">
    <text evidence="4">Belongs to the RRM NCBP2 family.</text>
</comment>
<name>NCBP2_DROGR</name>
<dbReference type="EMBL" id="CH916374">
    <property type="protein sequence ID" value="EDV91251.1"/>
    <property type="molecule type" value="Genomic_DNA"/>
</dbReference>
<dbReference type="SMR" id="B4JUT1"/>
<dbReference type="FunCoup" id="B4JUT1">
    <property type="interactions" value="2170"/>
</dbReference>
<dbReference type="STRING" id="7222.B4JUT1"/>
<dbReference type="EnsemblMetazoa" id="FBtr0150515">
    <property type="protein sequence ID" value="FBpp0149007"/>
    <property type="gene ID" value="FBgn0122576"/>
</dbReference>
<dbReference type="EnsemblMetazoa" id="XM_001994586.2">
    <property type="protein sequence ID" value="XP_001994622.1"/>
    <property type="gene ID" value="LOC6568059"/>
</dbReference>
<dbReference type="GeneID" id="6568059"/>
<dbReference type="KEGG" id="dgr:6568059"/>
<dbReference type="CTD" id="42166"/>
<dbReference type="eggNOG" id="KOG0121">
    <property type="taxonomic scope" value="Eukaryota"/>
</dbReference>
<dbReference type="HOGENOM" id="CLU_070952_2_0_1"/>
<dbReference type="InParanoid" id="B4JUT1"/>
<dbReference type="OMA" id="DIRRIIM"/>
<dbReference type="OrthoDB" id="201398at2759"/>
<dbReference type="PhylomeDB" id="B4JUT1"/>
<dbReference type="Proteomes" id="UP000001070">
    <property type="component" value="Unassembled WGS sequence"/>
</dbReference>
<dbReference type="GO" id="GO:0005846">
    <property type="term" value="C:nuclear cap binding complex"/>
    <property type="evidence" value="ECO:0007669"/>
    <property type="project" value="InterPro"/>
</dbReference>
<dbReference type="GO" id="GO:0005634">
    <property type="term" value="C:nucleus"/>
    <property type="evidence" value="ECO:0007669"/>
    <property type="project" value="UniProtKB-SubCell"/>
</dbReference>
<dbReference type="GO" id="GO:0099523">
    <property type="term" value="C:presynaptic cytosol"/>
    <property type="evidence" value="ECO:0007669"/>
    <property type="project" value="EnsemblMetazoa"/>
</dbReference>
<dbReference type="GO" id="GO:0000339">
    <property type="term" value="F:RNA cap binding"/>
    <property type="evidence" value="ECO:0007669"/>
    <property type="project" value="InterPro"/>
</dbReference>
<dbReference type="GO" id="GO:0045292">
    <property type="term" value="P:mRNA cis splicing, via spliceosome"/>
    <property type="evidence" value="ECO:0007669"/>
    <property type="project" value="InterPro"/>
</dbReference>
<dbReference type="GO" id="GO:0045071">
    <property type="term" value="P:negative regulation of viral genome replication"/>
    <property type="evidence" value="ECO:0007669"/>
    <property type="project" value="EnsemblMetazoa"/>
</dbReference>
<dbReference type="GO" id="GO:0031053">
    <property type="term" value="P:primary miRNA processing"/>
    <property type="evidence" value="ECO:0007669"/>
    <property type="project" value="EnsemblMetazoa"/>
</dbReference>
<dbReference type="GO" id="GO:0035194">
    <property type="term" value="P:regulatory ncRNA-mediated post-transcriptional gene silencing"/>
    <property type="evidence" value="ECO:0007669"/>
    <property type="project" value="EnsemblMetazoa"/>
</dbReference>
<dbReference type="GO" id="GO:0030422">
    <property type="term" value="P:siRNA processing"/>
    <property type="evidence" value="ECO:0007669"/>
    <property type="project" value="EnsemblMetazoa"/>
</dbReference>
<dbReference type="CDD" id="cd12240">
    <property type="entry name" value="RRM_NCBP2"/>
    <property type="match status" value="1"/>
</dbReference>
<dbReference type="FunFam" id="3.30.70.330:FF:000128">
    <property type="entry name" value="Nuclear cap-binding protein subunit 2"/>
    <property type="match status" value="1"/>
</dbReference>
<dbReference type="Gene3D" id="3.30.70.330">
    <property type="match status" value="1"/>
</dbReference>
<dbReference type="InterPro" id="IPR027157">
    <property type="entry name" value="NCBP2"/>
</dbReference>
<dbReference type="InterPro" id="IPR034148">
    <property type="entry name" value="NCBP2_RRM"/>
</dbReference>
<dbReference type="InterPro" id="IPR012677">
    <property type="entry name" value="Nucleotide-bd_a/b_plait_sf"/>
</dbReference>
<dbReference type="InterPro" id="IPR035979">
    <property type="entry name" value="RBD_domain_sf"/>
</dbReference>
<dbReference type="InterPro" id="IPR000504">
    <property type="entry name" value="RRM_dom"/>
</dbReference>
<dbReference type="PANTHER" id="PTHR18847">
    <property type="entry name" value="20 KD NUCLEAR CAP BINDING PROTEIN"/>
    <property type="match status" value="1"/>
</dbReference>
<dbReference type="PANTHER" id="PTHR18847:SF0">
    <property type="entry name" value="NUCLEAR CAP-BINDING PROTEIN SUBUNIT 2"/>
    <property type="match status" value="1"/>
</dbReference>
<dbReference type="Pfam" id="PF00076">
    <property type="entry name" value="RRM_1"/>
    <property type="match status" value="1"/>
</dbReference>
<dbReference type="SMART" id="SM00360">
    <property type="entry name" value="RRM"/>
    <property type="match status" value="1"/>
</dbReference>
<dbReference type="SUPFAM" id="SSF54928">
    <property type="entry name" value="RNA-binding domain, RBD"/>
    <property type="match status" value="1"/>
</dbReference>
<dbReference type="PROSITE" id="PS50102">
    <property type="entry name" value="RRM"/>
    <property type="match status" value="1"/>
</dbReference>
<sequence>MTASVDLSSYRDQHFKGSRSEQERSLRDSTTLYVGNLSFYTTEEQIHELFSRCGDVRIIVMGLDKYKKTPCGFCFVEYYTRAEAEAAMRFVNGTRLDDRLIRVDWDAGFIEGRQYGRGKTGGQVRDEYRTDYDAGRGGYGKLLSQKIAPNTDNR</sequence>
<keyword id="KW-0507">mRNA processing</keyword>
<keyword id="KW-0508">mRNA splicing</keyword>
<keyword id="KW-0539">Nucleus</keyword>
<keyword id="KW-1185">Reference proteome</keyword>
<keyword id="KW-0694">RNA-binding</keyword>
<keyword id="KW-0943">RNA-mediated gene silencing</keyword>
<proteinExistence type="inferred from homology"/>
<gene>
    <name type="primary">Cbp20</name>
    <name type="ORF">GH15101</name>
</gene>
<reference key="1">
    <citation type="journal article" date="2007" name="Nature">
        <title>Evolution of genes and genomes on the Drosophila phylogeny.</title>
        <authorList>
            <consortium name="Drosophila 12 genomes consortium"/>
        </authorList>
    </citation>
    <scope>NUCLEOTIDE SEQUENCE [LARGE SCALE GENOMIC DNA]</scope>
    <source>
        <strain>Tucson 15287-2541.00</strain>
    </source>
</reference>
<organism>
    <name type="scientific">Drosophila grimshawi</name>
    <name type="common">Hawaiian fruit fly</name>
    <name type="synonym">Idiomyia grimshawi</name>
    <dbReference type="NCBI Taxonomy" id="7222"/>
    <lineage>
        <taxon>Eukaryota</taxon>
        <taxon>Metazoa</taxon>
        <taxon>Ecdysozoa</taxon>
        <taxon>Arthropoda</taxon>
        <taxon>Hexapoda</taxon>
        <taxon>Insecta</taxon>
        <taxon>Pterygota</taxon>
        <taxon>Neoptera</taxon>
        <taxon>Endopterygota</taxon>
        <taxon>Diptera</taxon>
        <taxon>Brachycera</taxon>
        <taxon>Muscomorpha</taxon>
        <taxon>Ephydroidea</taxon>
        <taxon>Drosophilidae</taxon>
        <taxon>Drosophila</taxon>
        <taxon>Hawaiian Drosophila</taxon>
    </lineage>
</organism>
<accession>B4JUT1</accession>
<evidence type="ECO:0000250" key="1"/>
<evidence type="ECO:0000255" key="2">
    <source>
        <dbReference type="PROSITE-ProRule" id="PRU00176"/>
    </source>
</evidence>
<evidence type="ECO:0000256" key="3">
    <source>
        <dbReference type="SAM" id="MobiDB-lite"/>
    </source>
</evidence>
<evidence type="ECO:0000305" key="4"/>